<comment type="function">
    <text evidence="1">Part of the Sec protein translocase complex. Interacts with the SecYEG preprotein conducting channel. SecDF uses the proton motive force (PMF) to complete protein translocation after the ATP-dependent function of SecA.</text>
</comment>
<comment type="subunit">
    <text evidence="1">Forms a complex with SecD. Part of the essential Sec protein translocation apparatus which comprises SecA, SecYEG and auxiliary proteins SecDF-YajC and YidC.</text>
</comment>
<comment type="subcellular location">
    <subcellularLocation>
        <location evidence="1">Cell inner membrane</location>
        <topology evidence="1">Multi-pass membrane protein</topology>
    </subcellularLocation>
</comment>
<comment type="similarity">
    <text evidence="1">Belongs to the SecD/SecF family. SecF subfamily.</text>
</comment>
<protein>
    <recommendedName>
        <fullName>Protein translocase subunit SecF</fullName>
    </recommendedName>
</protein>
<accession>Q9ZJ65</accession>
<reference key="1">
    <citation type="journal article" date="1999" name="Nature">
        <title>Genomic sequence comparison of two unrelated isolates of the human gastric pathogen Helicobacter pylori.</title>
        <authorList>
            <person name="Alm R.A."/>
            <person name="Ling L.-S.L."/>
            <person name="Moir D.T."/>
            <person name="King B.L."/>
            <person name="Brown E.D."/>
            <person name="Doig P.C."/>
            <person name="Smith D.R."/>
            <person name="Noonan B."/>
            <person name="Guild B.C."/>
            <person name="deJonge B.L."/>
            <person name="Carmel G."/>
            <person name="Tummino P.J."/>
            <person name="Caruso A."/>
            <person name="Uria-Nickelsen M."/>
            <person name="Mills D.M."/>
            <person name="Ives C."/>
            <person name="Gibson R."/>
            <person name="Merberg D."/>
            <person name="Mills S.D."/>
            <person name="Jiang Q."/>
            <person name="Taylor D.E."/>
            <person name="Vovis G.F."/>
            <person name="Trust T.J."/>
        </authorList>
    </citation>
    <scope>NUCLEOTIDE SEQUENCE [LARGE SCALE GENOMIC DNA]</scope>
    <source>
        <strain>J99 / ATCC 700824</strain>
    </source>
</reference>
<dbReference type="EMBL" id="AE001439">
    <property type="protein sequence ID" value="AAD07023.1"/>
    <property type="molecule type" value="Genomic_DNA"/>
</dbReference>
<dbReference type="PIR" id="E71805">
    <property type="entry name" value="E71805"/>
</dbReference>
<dbReference type="RefSeq" id="WP_000418652.1">
    <property type="nucleotide sequence ID" value="NZ_CP011330.1"/>
</dbReference>
<dbReference type="SMR" id="Q9ZJ65"/>
<dbReference type="KEGG" id="hpj:jhp_1450"/>
<dbReference type="PATRIC" id="fig|85963.30.peg.1093"/>
<dbReference type="eggNOG" id="COG0341">
    <property type="taxonomic scope" value="Bacteria"/>
</dbReference>
<dbReference type="Proteomes" id="UP000000804">
    <property type="component" value="Chromosome"/>
</dbReference>
<dbReference type="GO" id="GO:0005886">
    <property type="term" value="C:plasma membrane"/>
    <property type="evidence" value="ECO:0007669"/>
    <property type="project" value="UniProtKB-SubCell"/>
</dbReference>
<dbReference type="GO" id="GO:0015450">
    <property type="term" value="F:protein-transporting ATPase activity"/>
    <property type="evidence" value="ECO:0007669"/>
    <property type="project" value="InterPro"/>
</dbReference>
<dbReference type="GO" id="GO:0065002">
    <property type="term" value="P:intracellular protein transmembrane transport"/>
    <property type="evidence" value="ECO:0007669"/>
    <property type="project" value="UniProtKB-UniRule"/>
</dbReference>
<dbReference type="GO" id="GO:0006605">
    <property type="term" value="P:protein targeting"/>
    <property type="evidence" value="ECO:0007669"/>
    <property type="project" value="UniProtKB-UniRule"/>
</dbReference>
<dbReference type="GO" id="GO:0043952">
    <property type="term" value="P:protein transport by the Sec complex"/>
    <property type="evidence" value="ECO:0007669"/>
    <property type="project" value="UniProtKB-UniRule"/>
</dbReference>
<dbReference type="Gene3D" id="1.20.1640.10">
    <property type="entry name" value="Multidrug efflux transporter AcrB transmembrane domain"/>
    <property type="match status" value="1"/>
</dbReference>
<dbReference type="HAMAP" id="MF_01464_B">
    <property type="entry name" value="SecF_B"/>
    <property type="match status" value="1"/>
</dbReference>
<dbReference type="InterPro" id="IPR022813">
    <property type="entry name" value="SecD/SecF_arch_bac"/>
</dbReference>
<dbReference type="InterPro" id="IPR022645">
    <property type="entry name" value="SecD/SecF_bac"/>
</dbReference>
<dbReference type="InterPro" id="IPR022646">
    <property type="entry name" value="SecD/SecF_CS"/>
</dbReference>
<dbReference type="InterPro" id="IPR048634">
    <property type="entry name" value="SecD_SecF_C"/>
</dbReference>
<dbReference type="InterPro" id="IPR055344">
    <property type="entry name" value="SecD_SecF_C_bact"/>
</dbReference>
<dbReference type="InterPro" id="IPR005665">
    <property type="entry name" value="SecF_bac"/>
</dbReference>
<dbReference type="NCBIfam" id="TIGR00916">
    <property type="entry name" value="2A0604s01"/>
    <property type="match status" value="1"/>
</dbReference>
<dbReference type="NCBIfam" id="TIGR00966">
    <property type="entry name" value="transloc_SecF"/>
    <property type="match status" value="1"/>
</dbReference>
<dbReference type="PANTHER" id="PTHR30081:SF8">
    <property type="entry name" value="PROTEIN TRANSLOCASE SUBUNIT SECF"/>
    <property type="match status" value="1"/>
</dbReference>
<dbReference type="PANTHER" id="PTHR30081">
    <property type="entry name" value="PROTEIN-EXPORT MEMBRANE PROTEIN SEC"/>
    <property type="match status" value="1"/>
</dbReference>
<dbReference type="Pfam" id="PF07549">
    <property type="entry name" value="Sec_GG"/>
    <property type="match status" value="1"/>
</dbReference>
<dbReference type="Pfam" id="PF02355">
    <property type="entry name" value="SecD_SecF_C"/>
    <property type="match status" value="1"/>
</dbReference>
<dbReference type="PRINTS" id="PR01755">
    <property type="entry name" value="SECFTRNLCASE"/>
</dbReference>
<dbReference type="SUPFAM" id="SSF82866">
    <property type="entry name" value="Multidrug efflux transporter AcrB transmembrane domain"/>
    <property type="match status" value="1"/>
</dbReference>
<organism>
    <name type="scientific">Helicobacter pylori (strain J99 / ATCC 700824)</name>
    <name type="common">Campylobacter pylori J99</name>
    <dbReference type="NCBI Taxonomy" id="85963"/>
    <lineage>
        <taxon>Bacteria</taxon>
        <taxon>Pseudomonadati</taxon>
        <taxon>Campylobacterota</taxon>
        <taxon>Epsilonproteobacteria</taxon>
        <taxon>Campylobacterales</taxon>
        <taxon>Helicobacteraceae</taxon>
        <taxon>Helicobacter</taxon>
    </lineage>
</organism>
<evidence type="ECO:0000255" key="1">
    <source>
        <dbReference type="HAMAP-Rule" id="MF_01464"/>
    </source>
</evidence>
<gene>
    <name evidence="1" type="primary">secF</name>
    <name type="ordered locus">jhp_1450</name>
</gene>
<proteinExistence type="inferred from homology"/>
<feature type="chain" id="PRO_0000095981" description="Protein translocase subunit SecF">
    <location>
        <begin position="1"/>
        <end position="323"/>
    </location>
</feature>
<feature type="transmembrane region" description="Helical" evidence="1">
    <location>
        <begin position="19"/>
        <end position="39"/>
    </location>
</feature>
<feature type="transmembrane region" description="Helical" evidence="1">
    <location>
        <begin position="138"/>
        <end position="158"/>
    </location>
</feature>
<feature type="transmembrane region" description="Helical" evidence="1">
    <location>
        <begin position="162"/>
        <end position="182"/>
    </location>
</feature>
<feature type="transmembrane region" description="Helical" evidence="1">
    <location>
        <begin position="189"/>
        <end position="209"/>
    </location>
</feature>
<feature type="transmembrane region" description="Helical" evidence="1">
    <location>
        <begin position="244"/>
        <end position="264"/>
    </location>
</feature>
<feature type="transmembrane region" description="Helical" evidence="1">
    <location>
        <begin position="269"/>
        <end position="289"/>
    </location>
</feature>
<sequence length="323" mass="36143">MELFKQVRILSFMRYSNYGVIVSAILVLLALGLLFFKGFSLGIDFAGGSLVQVRYTQNAPIKEVRDLFEKEARFKGVQVSEFGSKEEILIKFPFVETAENEDLNAIVANILKPSGDFEIRKFDTVGPRVGSELKEKGILSLILALIAIMVYVSFRYEWRFALASVVALVHDVILVASSVIVFKIDMNLEVIAALLTLIGYSINDTIIIFDRIREEMLSQKTKNATQAIDEAISSTLTRTLLTSLTVFFVVLILCVFGSKIIIGFSLPMLIGTIVGTYSSIFIAPKVALLLGFDMGKYYENEARKIKKAQEKEKMRRLYEGGQV</sequence>
<keyword id="KW-0997">Cell inner membrane</keyword>
<keyword id="KW-1003">Cell membrane</keyword>
<keyword id="KW-0472">Membrane</keyword>
<keyword id="KW-0653">Protein transport</keyword>
<keyword id="KW-0811">Translocation</keyword>
<keyword id="KW-0812">Transmembrane</keyword>
<keyword id="KW-1133">Transmembrane helix</keyword>
<keyword id="KW-0813">Transport</keyword>
<name>SECF_HELPJ</name>